<gene>
    <name evidence="5" type="ORF">kpv71_52</name>
</gene>
<sequence>MALIRLVAPGRVFSDLASMVAYPNFQVQDKITLLGSAGGDFTFTTTASVVDNGTVFAVPGGYLLRKFVGPAYSSWFSNWTGIVTFMSAPNRHLVVDTVLQATSVLNIKSNSTLEFTDTGRILPDAAVARQVLNIIGSAPSVFVPLAADAAAGSKVITVAAGALSAVKGTYLYLRSNGLCDGGPNTYGVKISQIRKVVGVSTSGGVTSIRLDKALHYNYYLSDAAEVGIPTMVENVTLVSPYINEFGYDDLNRFFTIGISANFAADLHIQDGVIIGNKRPGASDIEGRSAIKFNNCVDSTVKGTCFYNIGWYGVEVLGCSEDTEVHDIHAMDVRHAISLNWQSTADGDKWGEPIEFLGVNCEAYNTTQAGFDTHDIGKRVKFVRCVSYDSADDGFQARTNGVEYLNCRAYRAAMDGFASNTGVAFPIYRECLAYDNVRSGFNCSYGGGYVYDCEAHGSQDGVRINGGRVKGGRYTRNSRSHIFVTKDVAETAQTSLEIDGVRMRYDGTGRAAYFHGTMGIDPTLVSMSNNDMTGHGLFWALLSGYTVQPTPPRMSRNLLDDTGIRGVATLVAGKATVNARVRGNFGSVANSFKWVSEVKLTRLTFPSSAGALTVTSVAQNQDVPTPNPDLNSFVIRSSNTADVSQVAWEVYL</sequence>
<organismHost>
    <name type="scientific">Klebsiella pneumoniae</name>
    <dbReference type="NCBI Taxonomy" id="573"/>
</organismHost>
<keyword id="KW-1238">Degradation of host capsule during virus entry</keyword>
<keyword id="KW-1235">Degradation of host cell envelope components during virus entry</keyword>
<keyword id="KW-0945">Host-virus interaction</keyword>
<keyword id="KW-0456">Lyase</keyword>
<keyword id="KW-1233">Viral attachment to host adhesion receptor</keyword>
<keyword id="KW-1161">Viral attachment to host cell</keyword>
<keyword id="KW-1227">Viral tail protein</keyword>
<keyword id="KW-0946">Virion</keyword>
<keyword id="KW-1160">Virus entry into host cell</keyword>
<comment type="function">
    <text evidence="1 2">Functions as a receptor binding protein (RBP) and mediates the attachment to the host capsular exopolysaccharides (By similarity). Displays a lyase activity that specifically degrades the K1-type polysaccharides of Klebsiella pneumoniae capsule (PubMed:28988127).</text>
</comment>
<comment type="subunit">
    <text evidence="1">Homotrimer.</text>
</comment>
<comment type="subcellular location">
    <subcellularLocation>
        <location evidence="4">Virion</location>
    </subcellularLocation>
    <text evidence="4">Tail appendage.</text>
</comment>
<comment type="similarity">
    <text evidence="4">Belongs to the K1-specific depolymerase family.</text>
</comment>
<dbReference type="EC" id="4.-.-.-" evidence="1"/>
<dbReference type="EMBL" id="KU666550">
    <property type="protein sequence ID" value="AMQ66478.1"/>
    <property type="molecule type" value="Genomic_DNA"/>
</dbReference>
<dbReference type="RefSeq" id="YP_009302756.1">
    <property type="nucleotide sequence ID" value="NC_031246.1"/>
</dbReference>
<dbReference type="SMR" id="A0A142F121"/>
<dbReference type="GeneID" id="29124289"/>
<dbReference type="KEGG" id="vg:29124289"/>
<dbReference type="OrthoDB" id="711at10239"/>
<dbReference type="Proteomes" id="UP000202850">
    <property type="component" value="Segment"/>
</dbReference>
<dbReference type="GO" id="GO:0098015">
    <property type="term" value="C:virus tail"/>
    <property type="evidence" value="ECO:0007669"/>
    <property type="project" value="UniProtKB-KW"/>
</dbReference>
<dbReference type="GO" id="GO:0016829">
    <property type="term" value="F:lyase activity"/>
    <property type="evidence" value="ECO:0007669"/>
    <property type="project" value="UniProtKB-KW"/>
</dbReference>
<dbReference type="GO" id="GO:0098671">
    <property type="term" value="P:adhesion receptor-mediated virion attachment to host cell"/>
    <property type="evidence" value="ECO:0007669"/>
    <property type="project" value="UniProtKB-KW"/>
</dbReference>
<dbReference type="GO" id="GO:0098994">
    <property type="term" value="P:symbiont entry into host cell via disruption of host cell envelope"/>
    <property type="evidence" value="ECO:0007669"/>
    <property type="project" value="UniProtKB-KW"/>
</dbReference>
<dbReference type="GO" id="GO:0098996">
    <property type="term" value="P:symbiont entry into host cell via disruption of host cell glycocalyx"/>
    <property type="evidence" value="ECO:0000314"/>
    <property type="project" value="UniProtKB"/>
</dbReference>
<dbReference type="Gene3D" id="2.160.20.10">
    <property type="entry name" value="Single-stranded right-handed beta-helix, Pectin lyase-like"/>
    <property type="match status" value="1"/>
</dbReference>
<dbReference type="InterPro" id="IPR056204">
    <property type="entry name" value="K1-lyase_C"/>
</dbReference>
<dbReference type="InterPro" id="IPR012334">
    <property type="entry name" value="Pectin_lyas_fold"/>
</dbReference>
<dbReference type="InterPro" id="IPR011050">
    <property type="entry name" value="Pectin_lyase_fold/virulence"/>
</dbReference>
<dbReference type="Pfam" id="PF24146">
    <property type="entry name" value="K1-lyase_C"/>
    <property type="match status" value="1"/>
</dbReference>
<dbReference type="Pfam" id="PF24145">
    <property type="entry name" value="K1-lyase_N"/>
    <property type="match status" value="1"/>
</dbReference>
<dbReference type="Pfam" id="PF24149">
    <property type="entry name" value="K1-lyase_Rider"/>
    <property type="match status" value="1"/>
</dbReference>
<dbReference type="SUPFAM" id="SSF51126">
    <property type="entry name" value="Pectin lyase-like"/>
    <property type="match status" value="1"/>
</dbReference>
<organism>
    <name type="scientific">Klebsiella phage KpV71</name>
    <name type="common">Bacteriophage KpV71</name>
    <dbReference type="NCBI Taxonomy" id="1796998"/>
    <lineage>
        <taxon>Viruses</taxon>
        <taxon>Duplodnaviria</taxon>
        <taxon>Heunggongvirae</taxon>
        <taxon>Uroviricota</taxon>
        <taxon>Caudoviricetes</taxon>
        <taxon>Autographiviridae</taxon>
        <taxon>Slopekvirinae</taxon>
        <taxon>Drulisvirus</taxon>
        <taxon>Drulisvirus KpV71</taxon>
    </lineage>
</organism>
<reference key="1">
    <citation type="journal article" date="2018" name="Virus Res.">
        <title>Comparative genome analysis of novel Podoviruses lytic for hypermucoviscous Klebsiella pneumoniae of K1, K2, and K57 capsular types.</title>
        <authorList>
            <person name="Solovieva E.V."/>
            <person name="Myakinina V.P."/>
            <person name="Kislichkina A.A."/>
            <person name="Krasilnikova V.M."/>
            <person name="Verevkin V.V."/>
            <person name="Mochalov V.V."/>
            <person name="Lev A.I."/>
            <person name="Fursova N.K."/>
            <person name="Volozhantsev N.V."/>
        </authorList>
    </citation>
    <scope>NUCLEOTIDE SEQUENCE [LARGE SCALE GENOMIC DNA]</scope>
    <scope>FUNCTION</scope>
</reference>
<reference key="2">
    <citation type="journal article" date="2019" name="Front. Microbiol.">
        <title>Modeling the Architecture of Depolymerase-Containing Receptor Binding Proteins in Klebsiella Phages.</title>
        <authorList>
            <person name="Latka A."/>
            <person name="Leiman P.G."/>
            <person name="Drulis-Kawa Z."/>
            <person name="Briers Y."/>
        </authorList>
    </citation>
    <scope>REVIEW</scope>
</reference>
<accession>A0A142F121</accession>
<proteinExistence type="inferred from homology"/>
<feature type="chain" id="PRO_0000458728" description="Depolymerase, capsule K1-specific">
    <location>
        <begin position="1"/>
        <end position="651"/>
    </location>
</feature>
<feature type="region of interest" description="Interaction with the host trisaccharides on the capsule" evidence="1">
    <location>
        <begin position="71"/>
        <end position="559"/>
    </location>
</feature>
<feature type="site" description="Substrate binding 1" evidence="1">
    <location>
        <position position="130"/>
    </location>
</feature>
<feature type="site" description="Substrate binding 2" evidence="1">
    <location>
        <position position="217"/>
    </location>
</feature>
<feature type="site" description="Substrate binding 1" evidence="1">
    <location>
        <position position="291"/>
    </location>
</feature>
<feature type="site" description="Important for catalysis" evidence="1">
    <location>
        <position position="311"/>
    </location>
</feature>
<feature type="site" description="Substrate binding 1" evidence="1">
    <location>
        <position position="314"/>
    </location>
</feature>
<feature type="site" description="Substrate binding 1" evidence="1">
    <location>
        <position position="339"/>
    </location>
</feature>
<feature type="site" description="Substrate binding 1" evidence="1">
    <location>
        <position position="340"/>
    </location>
</feature>
<feature type="site" description="Important for catalysis" evidence="1">
    <location>
        <position position="373"/>
    </location>
</feature>
<feature type="site" description="Substrate binding 1" evidence="1">
    <location>
        <position position="373"/>
    </location>
</feature>
<feature type="site" description="Substrate binding 2" evidence="1">
    <location>
        <position position="378"/>
    </location>
</feature>
<feature type="site" description="Important for catalysis" evidence="1">
    <location>
        <position position="397"/>
    </location>
</feature>
<feature type="site" description="Substrate binding 2 and important for the adsorption and infectivity of phage" evidence="1">
    <location>
        <position position="472"/>
    </location>
</feature>
<protein>
    <recommendedName>
        <fullName evidence="4">Depolymerase, capsule K1-specific</fullName>
        <ecNumber evidence="1">4.-.-.-</ecNumber>
    </recommendedName>
    <alternativeName>
        <fullName evidence="3">Dep_kpv71</fullName>
    </alternativeName>
    <alternativeName>
        <fullName evidence="4">Gene product 52</fullName>
        <shortName evidence="4">gp52</shortName>
    </alternativeName>
    <alternativeName>
        <fullName evidence="4">Probable tail spike protein</fullName>
    </alternativeName>
</protein>
<name>DEPOL_BPK71</name>
<evidence type="ECO:0000250" key="1">
    <source>
        <dbReference type="UniProtKB" id="A0A068Q5Q5"/>
    </source>
</evidence>
<evidence type="ECO:0000269" key="2">
    <source>
    </source>
</evidence>
<evidence type="ECO:0000303" key="3">
    <source>
    </source>
</evidence>
<evidence type="ECO:0000305" key="4"/>
<evidence type="ECO:0000312" key="5">
    <source>
        <dbReference type="EMBL" id="AMQ66478.1"/>
    </source>
</evidence>